<dbReference type="EC" id="2.1.1.393" evidence="5"/>
<dbReference type="EMBL" id="KC708445">
    <property type="protein sequence ID" value="AHH02777.1"/>
    <property type="molecule type" value="mRNA"/>
</dbReference>
<dbReference type="KEGG" id="ag:AHH02777"/>
<dbReference type="BioCyc" id="MetaCyc:MONOMER-20649"/>
<dbReference type="UniPathway" id="UPA00310"/>
<dbReference type="GO" id="GO:0005737">
    <property type="term" value="C:cytoplasm"/>
    <property type="evidence" value="ECO:0007669"/>
    <property type="project" value="UniProtKB-ARBA"/>
</dbReference>
<dbReference type="GO" id="GO:0008757">
    <property type="term" value="F:S-adenosylmethionine-dependent methyltransferase activity"/>
    <property type="evidence" value="ECO:0007669"/>
    <property type="project" value="InterPro"/>
</dbReference>
<dbReference type="GO" id="GO:0009820">
    <property type="term" value="P:alkaloid metabolic process"/>
    <property type="evidence" value="ECO:0007669"/>
    <property type="project" value="UniProtKB-KW"/>
</dbReference>
<dbReference type="GO" id="GO:0032259">
    <property type="term" value="P:methylation"/>
    <property type="evidence" value="ECO:0007669"/>
    <property type="project" value="UniProtKB-UniRule"/>
</dbReference>
<dbReference type="CDD" id="cd02440">
    <property type="entry name" value="AdoMet_MTases"/>
    <property type="match status" value="1"/>
</dbReference>
<dbReference type="Gene3D" id="3.40.50.150">
    <property type="entry name" value="Vaccinia Virus protein VP39"/>
    <property type="match status" value="1"/>
</dbReference>
<dbReference type="InterPro" id="IPR013216">
    <property type="entry name" value="Methyltransf_11"/>
</dbReference>
<dbReference type="InterPro" id="IPR025774">
    <property type="entry name" value="MTs_g-TMT"/>
</dbReference>
<dbReference type="InterPro" id="IPR029063">
    <property type="entry name" value="SAM-dependent_MTases_sf"/>
</dbReference>
<dbReference type="PANTHER" id="PTHR43591:SF81">
    <property type="entry name" value="MAGNESIUM PROTOPORPHYRIN IX METHYLTRANSFERASE, CHLOROPLASTIC-RELATED"/>
    <property type="match status" value="1"/>
</dbReference>
<dbReference type="PANTHER" id="PTHR43591">
    <property type="entry name" value="METHYLTRANSFERASE"/>
    <property type="match status" value="1"/>
</dbReference>
<dbReference type="Pfam" id="PF08241">
    <property type="entry name" value="Methyltransf_11"/>
    <property type="match status" value="1"/>
</dbReference>
<dbReference type="SUPFAM" id="SSF53335">
    <property type="entry name" value="S-adenosyl-L-methionine-dependent methyltransferases"/>
    <property type="match status" value="1"/>
</dbReference>
<dbReference type="PROSITE" id="PS51581">
    <property type="entry name" value="SAM_GTMT"/>
    <property type="match status" value="1"/>
</dbReference>
<evidence type="ECO:0000250" key="1">
    <source>
        <dbReference type="UniProtKB" id="A0A075D5I4"/>
    </source>
</evidence>
<evidence type="ECO:0000250" key="2">
    <source>
        <dbReference type="UniProtKB" id="W5U2K2"/>
    </source>
</evidence>
<evidence type="ECO:0000255" key="3"/>
<evidence type="ECO:0000255" key="4">
    <source>
        <dbReference type="PROSITE-ProRule" id="PRU00914"/>
    </source>
</evidence>
<evidence type="ECO:0000269" key="5">
    <source>
    </source>
</evidence>
<evidence type="ECO:0000303" key="6">
    <source>
    </source>
</evidence>
<evidence type="ECO:0000312" key="7">
    <source>
        <dbReference type="EMBL" id="AHH02777.1"/>
    </source>
</evidence>
<comment type="function">
    <text evidence="5">N-methyltransferase involved in the biosynthesis of ajmaline-type monoterpenoid indole alkaloids (MIAs) natural products, important plant-derived pharmaceuticals used in the therapy of heart disorders (PubMed:27122470). Catalyzes the indole N-methylation of ajmaline to produce 4-methylajmaline (PubMed:27122470). Also able, with a lower efficiency, to mediates the conversion of norajmaline to 4-methylnorajmaline (PubMed:27122470).</text>
</comment>
<comment type="catalytic activity">
    <reaction evidence="5">
        <text>ajmaline + S-adenosyl-L-methionine = 4-methylajmaline + S-adenosyl-L-homocysteine + H(+)</text>
        <dbReference type="Rhea" id="RHEA:79631"/>
        <dbReference type="ChEBI" id="CHEBI:15378"/>
        <dbReference type="ChEBI" id="CHEBI:57856"/>
        <dbReference type="ChEBI" id="CHEBI:58567"/>
        <dbReference type="ChEBI" id="CHEBI:59789"/>
        <dbReference type="ChEBI" id="CHEBI:230509"/>
        <dbReference type="EC" id="2.1.1.393"/>
    </reaction>
    <physiologicalReaction direction="left-to-right" evidence="5">
        <dbReference type="Rhea" id="RHEA:79632"/>
    </physiologicalReaction>
</comment>
<comment type="catalytic activity">
    <reaction evidence="5">
        <text>norajmaline + S-adenosyl-L-methionine = 4-methylnorajmaline + S-adenosyl-L-homocysteine + H(+)</text>
        <dbReference type="Rhea" id="RHEA:79627"/>
        <dbReference type="ChEBI" id="CHEBI:15378"/>
        <dbReference type="ChEBI" id="CHEBI:57856"/>
        <dbReference type="ChEBI" id="CHEBI:59789"/>
        <dbReference type="ChEBI" id="CHEBI:77618"/>
        <dbReference type="ChEBI" id="CHEBI:230510"/>
        <dbReference type="EC" id="2.1.1.393"/>
    </reaction>
    <physiologicalReaction direction="left-to-right" evidence="5">
        <dbReference type="Rhea" id="RHEA:79628"/>
    </physiologicalReaction>
</comment>
<comment type="biophysicochemical properties">
    <kinetics>
        <KM evidence="5">17 uM for S-adenosyl-L-methionine</KM>
        <KM evidence="5">184.3 uM for norajmaline</KM>
        <Vmax evidence="5">45.7 pmol/sec/mg enzyme with S-adenosyl-L-methionine as substrate</Vmax>
        <Vmax evidence="5">60.3 pmol/sec/mg enzyme with norajmaline as substrate</Vmax>
        <text evidence="5">kcat is 0.7 sec(-1) with S-adenosyl-L-methionine as substrate (PubMed:27122470). kcat is 1 sec(-1) with norajmaline as substrate (PubMed:27122470).</text>
    </kinetics>
    <phDependence>
        <text evidence="5">Optimum pH is 7.5.</text>
    </phDependence>
    <temperatureDependence>
        <text evidence="5">Optimum temperature is 30 degrees Celsius.</text>
    </temperatureDependence>
</comment>
<comment type="pathway">
    <text evidence="5">Alkaloid biosynthesis; ajmaline biosynthesis.</text>
</comment>
<comment type="subunit">
    <text evidence="2">Homodimer.</text>
</comment>
<comment type="subcellular location">
    <subcellularLocation>
        <location evidence="1">Vacuole membrane</location>
    </subcellularLocation>
</comment>
<comment type="tissue specificity">
    <text evidence="5">Mainly expressed in roots, but barely detectable in stems and flowers.</text>
</comment>
<comment type="similarity">
    <text evidence="4">Belongs to the class I-like SAM-binding methyltransferase superfamily. gTMT family.</text>
</comment>
<feature type="chain" id="PRO_0000462321" description="Ajmaline N-methyltransferase">
    <location>
        <begin position="1"/>
        <end position="291"/>
    </location>
</feature>
<feature type="region of interest" description="SAM motif I" evidence="4">
    <location>
        <begin position="71"/>
        <end position="80"/>
    </location>
</feature>
<feature type="region of interest" description="SAM motif II" evidence="4">
    <location>
        <begin position="134"/>
        <end position="142"/>
    </location>
</feature>
<feature type="region of interest" description="SAM motif III" evidence="4">
    <location>
        <begin position="161"/>
        <end position="170"/>
    </location>
</feature>
<feature type="short sequence motif" description="Vacuolar targeting signal" evidence="3">
    <location>
        <begin position="133"/>
        <end position="139"/>
    </location>
</feature>
<protein>
    <recommendedName>
        <fullName evidence="6">Ajmaline N-methyltransferase</fullName>
        <shortName evidence="6">RsANMT</shortName>
        <ecNumber evidence="5">2.1.1.393</ecNumber>
    </recommendedName>
    <alternativeName>
        <fullName evidence="7">Gamma-tocopherol-like methyltransferase ANMT</fullName>
    </alternativeName>
</protein>
<proteinExistence type="evidence at protein level"/>
<sequence>MAENQEALAEFYDKGVGVWDNLSREHMHFGYYAPGATATIGGHRASLVRLIDEALCFAEFPDDPEKKPRNMLDVGCGIGGTCLHVAKKYDIQCKGINISPEQVKIAQGLAAAQGLESKVSFDVGDALDMPYPDGAFDLVLSIHCIEHLQDKEKFIREMVRVAASGATIIILSHVHRDLSPSEQSLKPQEERVLRKIGSSVQAWFCPLSNYVSLLAPLPVEVIKIADWSRNIDPSSRLMLKVAFSVKGIVSNLMKGVQGWTAIKNVLPMKLLHKALHDGLVKFVVLTCRKSN</sequence>
<name>ANMT_RAUSE</name>
<organism>
    <name type="scientific">Rauvolfia serpentina</name>
    <name type="common">Serpentine wood</name>
    <name type="synonym">Ophioxylon serpentinum</name>
    <dbReference type="NCBI Taxonomy" id="4060"/>
    <lineage>
        <taxon>Eukaryota</taxon>
        <taxon>Viridiplantae</taxon>
        <taxon>Streptophyta</taxon>
        <taxon>Embryophyta</taxon>
        <taxon>Tracheophyta</taxon>
        <taxon>Spermatophyta</taxon>
        <taxon>Magnoliopsida</taxon>
        <taxon>eudicotyledons</taxon>
        <taxon>Gunneridae</taxon>
        <taxon>Pentapetalae</taxon>
        <taxon>asterids</taxon>
        <taxon>lamiids</taxon>
        <taxon>Gentianales</taxon>
        <taxon>Apocynaceae</taxon>
        <taxon>Rauvolfioideae</taxon>
        <taxon>Vinceae</taxon>
        <taxon>Rauvolfiinae</taxon>
        <taxon>Rauvolfia</taxon>
    </lineage>
</organism>
<reference evidence="7" key="1">
    <citation type="journal article" date="2016" name="Plant Physiol.">
        <title>A picrinine N-methyltransferase belongs to a new family of gamma-tocopherol-like methyltransferases found in medicinal plants that make biologically active monoterpenoid indole alkaloids.</title>
        <authorList>
            <person name="Levac D."/>
            <person name="Cazares P."/>
            <person name="Yu F."/>
            <person name="De Luca V."/>
        </authorList>
    </citation>
    <scope>NUCLEOTIDE SEQUENCE [MRNA]</scope>
</reference>
<reference key="2">
    <citation type="journal article" date="2016" name="Plant J.">
        <title>Rauvolfia serpentina N-methyltransferases involved in ajmaline and Nbeta -methylajmaline biosynthesis belong to a gene family derived from gamma-tocopherol C-methyltransferase.</title>
        <authorList>
            <person name="Cazares-Flores P."/>
            <person name="Levac D."/>
            <person name="De Luca V."/>
        </authorList>
    </citation>
    <scope>FUNCTION</scope>
    <scope>CATALYTIC ACTIVITY</scope>
    <scope>BIOPHYSICOCHEMICAL PROPERTIES</scope>
    <scope>PATHWAY</scope>
    <scope>TISSUE SPECIFICITY</scope>
</reference>
<accession>A0A075D654</accession>
<keyword id="KW-0017">Alkaloid metabolism</keyword>
<keyword id="KW-0472">Membrane</keyword>
<keyword id="KW-0489">Methyltransferase</keyword>
<keyword id="KW-0949">S-adenosyl-L-methionine</keyword>
<keyword id="KW-0808">Transferase</keyword>
<keyword id="KW-0926">Vacuole</keyword>
<gene>
    <name evidence="6" type="primary">ANMT</name>
    <name evidence="7" type="synonym">Rs820</name>
</gene>